<sequence>MAKLTKRMRVIREKVDATKQYDINEAIALLKELATAKFVESVDVAVNLGIDARKSDQNVRGATVLPHGTGRSVRVAVFTQGANAEAAKAAGAELVGMEDLADQIKKGEMNFDVVIASPDAMRVVGQLGQVLGPRGLMPNPKVGTVTPNVAEAVKNAKAGQVRYRNDKNGIIHTTIGKVDFDADKLKENLEALLVALKKAKPTQAKGVYIKKVSISTTMGAGVAVDQAGLSASVN</sequence>
<feature type="chain" id="PRO_1000165679" description="Large ribosomal subunit protein uL1">
    <location>
        <begin position="1"/>
        <end position="234"/>
    </location>
</feature>
<organism>
    <name type="scientific">Escherichia coli (strain 55989 / EAEC)</name>
    <dbReference type="NCBI Taxonomy" id="585055"/>
    <lineage>
        <taxon>Bacteria</taxon>
        <taxon>Pseudomonadati</taxon>
        <taxon>Pseudomonadota</taxon>
        <taxon>Gammaproteobacteria</taxon>
        <taxon>Enterobacterales</taxon>
        <taxon>Enterobacteriaceae</taxon>
        <taxon>Escherichia</taxon>
    </lineage>
</organism>
<comment type="function">
    <text evidence="1">Binds directly to 23S rRNA. The L1 stalk is quite mobile in the ribosome, and is involved in E site tRNA release.</text>
</comment>
<comment type="function">
    <text evidence="1">Protein L1 is also a translational repressor protein, it controls the translation of the L11 operon by binding to its mRNA.</text>
</comment>
<comment type="subunit">
    <text evidence="1">Part of the 50S ribosomal subunit.</text>
</comment>
<comment type="similarity">
    <text evidence="1">Belongs to the universal ribosomal protein uL1 family.</text>
</comment>
<dbReference type="EMBL" id="CU928145">
    <property type="protein sequence ID" value="CAV01222.1"/>
    <property type="molecule type" value="Genomic_DNA"/>
</dbReference>
<dbReference type="RefSeq" id="WP_001096684.1">
    <property type="nucleotide sequence ID" value="NC_011748.1"/>
</dbReference>
<dbReference type="SMR" id="B7LA77"/>
<dbReference type="GeneID" id="93777910"/>
<dbReference type="KEGG" id="eck:EC55989_4468"/>
<dbReference type="HOGENOM" id="CLU_062853_0_0_6"/>
<dbReference type="Proteomes" id="UP000000746">
    <property type="component" value="Chromosome"/>
</dbReference>
<dbReference type="GO" id="GO:0022625">
    <property type="term" value="C:cytosolic large ribosomal subunit"/>
    <property type="evidence" value="ECO:0007669"/>
    <property type="project" value="TreeGrafter"/>
</dbReference>
<dbReference type="GO" id="GO:0019843">
    <property type="term" value="F:rRNA binding"/>
    <property type="evidence" value="ECO:0007669"/>
    <property type="project" value="UniProtKB-UniRule"/>
</dbReference>
<dbReference type="GO" id="GO:0003735">
    <property type="term" value="F:structural constituent of ribosome"/>
    <property type="evidence" value="ECO:0007669"/>
    <property type="project" value="InterPro"/>
</dbReference>
<dbReference type="GO" id="GO:0000049">
    <property type="term" value="F:tRNA binding"/>
    <property type="evidence" value="ECO:0007669"/>
    <property type="project" value="UniProtKB-KW"/>
</dbReference>
<dbReference type="GO" id="GO:0006417">
    <property type="term" value="P:regulation of translation"/>
    <property type="evidence" value="ECO:0007669"/>
    <property type="project" value="UniProtKB-KW"/>
</dbReference>
<dbReference type="GO" id="GO:0006412">
    <property type="term" value="P:translation"/>
    <property type="evidence" value="ECO:0007669"/>
    <property type="project" value="UniProtKB-UniRule"/>
</dbReference>
<dbReference type="CDD" id="cd00403">
    <property type="entry name" value="Ribosomal_L1"/>
    <property type="match status" value="1"/>
</dbReference>
<dbReference type="FunFam" id="3.40.50.790:FF:000001">
    <property type="entry name" value="50S ribosomal protein L1"/>
    <property type="match status" value="1"/>
</dbReference>
<dbReference type="Gene3D" id="3.30.190.20">
    <property type="match status" value="1"/>
</dbReference>
<dbReference type="Gene3D" id="3.40.50.790">
    <property type="match status" value="1"/>
</dbReference>
<dbReference type="HAMAP" id="MF_01318_B">
    <property type="entry name" value="Ribosomal_uL1_B"/>
    <property type="match status" value="1"/>
</dbReference>
<dbReference type="InterPro" id="IPR005878">
    <property type="entry name" value="Ribosom_uL1_bac-type"/>
</dbReference>
<dbReference type="InterPro" id="IPR002143">
    <property type="entry name" value="Ribosomal_uL1"/>
</dbReference>
<dbReference type="InterPro" id="IPR023674">
    <property type="entry name" value="Ribosomal_uL1-like"/>
</dbReference>
<dbReference type="InterPro" id="IPR028364">
    <property type="entry name" value="Ribosomal_uL1/biogenesis"/>
</dbReference>
<dbReference type="InterPro" id="IPR016095">
    <property type="entry name" value="Ribosomal_uL1_3-a/b-sand"/>
</dbReference>
<dbReference type="InterPro" id="IPR023673">
    <property type="entry name" value="Ribosomal_uL1_CS"/>
</dbReference>
<dbReference type="NCBIfam" id="TIGR01169">
    <property type="entry name" value="rplA_bact"/>
    <property type="match status" value="1"/>
</dbReference>
<dbReference type="PANTHER" id="PTHR36427">
    <property type="entry name" value="54S RIBOSOMAL PROTEIN L1, MITOCHONDRIAL"/>
    <property type="match status" value="1"/>
</dbReference>
<dbReference type="PANTHER" id="PTHR36427:SF3">
    <property type="entry name" value="LARGE RIBOSOMAL SUBUNIT PROTEIN UL1M"/>
    <property type="match status" value="1"/>
</dbReference>
<dbReference type="Pfam" id="PF00687">
    <property type="entry name" value="Ribosomal_L1"/>
    <property type="match status" value="1"/>
</dbReference>
<dbReference type="PIRSF" id="PIRSF002155">
    <property type="entry name" value="Ribosomal_L1"/>
    <property type="match status" value="1"/>
</dbReference>
<dbReference type="SUPFAM" id="SSF56808">
    <property type="entry name" value="Ribosomal protein L1"/>
    <property type="match status" value="1"/>
</dbReference>
<dbReference type="PROSITE" id="PS01199">
    <property type="entry name" value="RIBOSOMAL_L1"/>
    <property type="match status" value="1"/>
</dbReference>
<accession>B7LA77</accession>
<name>RL1_ECO55</name>
<proteinExistence type="inferred from homology"/>
<reference key="1">
    <citation type="journal article" date="2009" name="PLoS Genet.">
        <title>Organised genome dynamics in the Escherichia coli species results in highly diverse adaptive paths.</title>
        <authorList>
            <person name="Touchon M."/>
            <person name="Hoede C."/>
            <person name="Tenaillon O."/>
            <person name="Barbe V."/>
            <person name="Baeriswyl S."/>
            <person name="Bidet P."/>
            <person name="Bingen E."/>
            <person name="Bonacorsi S."/>
            <person name="Bouchier C."/>
            <person name="Bouvet O."/>
            <person name="Calteau A."/>
            <person name="Chiapello H."/>
            <person name="Clermont O."/>
            <person name="Cruveiller S."/>
            <person name="Danchin A."/>
            <person name="Diard M."/>
            <person name="Dossat C."/>
            <person name="Karoui M.E."/>
            <person name="Frapy E."/>
            <person name="Garry L."/>
            <person name="Ghigo J.M."/>
            <person name="Gilles A.M."/>
            <person name="Johnson J."/>
            <person name="Le Bouguenec C."/>
            <person name="Lescat M."/>
            <person name="Mangenot S."/>
            <person name="Martinez-Jehanne V."/>
            <person name="Matic I."/>
            <person name="Nassif X."/>
            <person name="Oztas S."/>
            <person name="Petit M.A."/>
            <person name="Pichon C."/>
            <person name="Rouy Z."/>
            <person name="Ruf C.S."/>
            <person name="Schneider D."/>
            <person name="Tourret J."/>
            <person name="Vacherie B."/>
            <person name="Vallenet D."/>
            <person name="Medigue C."/>
            <person name="Rocha E.P.C."/>
            <person name="Denamur E."/>
        </authorList>
    </citation>
    <scope>NUCLEOTIDE SEQUENCE [LARGE SCALE GENOMIC DNA]</scope>
    <source>
        <strain>55989 / EAEC</strain>
    </source>
</reference>
<protein>
    <recommendedName>
        <fullName evidence="1">Large ribosomal subunit protein uL1</fullName>
    </recommendedName>
    <alternativeName>
        <fullName evidence="2">50S ribosomal protein L1</fullName>
    </alternativeName>
</protein>
<keyword id="KW-1185">Reference proteome</keyword>
<keyword id="KW-0678">Repressor</keyword>
<keyword id="KW-0687">Ribonucleoprotein</keyword>
<keyword id="KW-0689">Ribosomal protein</keyword>
<keyword id="KW-0694">RNA-binding</keyword>
<keyword id="KW-0699">rRNA-binding</keyword>
<keyword id="KW-0810">Translation regulation</keyword>
<keyword id="KW-0820">tRNA-binding</keyword>
<evidence type="ECO:0000255" key="1">
    <source>
        <dbReference type="HAMAP-Rule" id="MF_01318"/>
    </source>
</evidence>
<evidence type="ECO:0000305" key="2"/>
<gene>
    <name evidence="1" type="primary">rplA</name>
    <name type="ordered locus">EC55989_4468</name>
</gene>